<evidence type="ECO:0000255" key="1"/>
<evidence type="ECO:0000269" key="2">
    <source>
    </source>
</evidence>
<evidence type="ECO:0000269" key="3">
    <source>
    </source>
</evidence>
<evidence type="ECO:0000305" key="4"/>
<evidence type="ECO:0007744" key="5">
    <source>
    </source>
</evidence>
<evidence type="ECO:0007744" key="6">
    <source>
    </source>
</evidence>
<evidence type="ECO:0007829" key="7">
    <source>
        <dbReference type="PDB" id="1YNX"/>
    </source>
</evidence>
<evidence type="ECO:0007829" key="8">
    <source>
        <dbReference type="PDB" id="5M1X"/>
    </source>
</evidence>
<evidence type="ECO:0007829" key="9">
    <source>
        <dbReference type="PDB" id="8B4J"/>
    </source>
</evidence>
<evidence type="ECO:0007829" key="10">
    <source>
        <dbReference type="PDB" id="8B4K"/>
    </source>
</evidence>
<gene>
    <name type="primary">RFA1</name>
    <name type="synonym">BUF2</name>
    <name type="synonym">RPA1</name>
    <name type="ordered locus">YAR007C</name>
    <name type="ORF">FUN3</name>
</gene>
<sequence length="621" mass="70348">MSSVQLSRGDFHSIFTNKQRYDNPTGGVYQVYNTRKSDGANSNRKNLIMISDGIYHMKALLRNQAASKFQSMELQRGDIIRVIIAEPAIVRERKKYVLLVDDFELVQSRADMVNQTSTFLDNYFSEHPNETLKDEDITDSGNVANQTNASNAGVPDMLHSNSNLNANERKFANENPNSQKTRPIFAIEQLSPYQNVWTIKARVSYKGEIKTWHNQRGDGKLFNVNFLDTSGEIRATAFNDFATKFNEILQEGKVYYVSKAKLQPAKPQFTNLTHPYELNLDRDTVIEECFDESNVPKTHFNFIKLDAIQNQEVNSNVDVLGIIQTINPHFELTSRAGKKFDRRDITIVDDSGFSISVGLWNQQALDFNLPEGSVAAIKGVRVTDFGGKSLSMGFSSTLIPNPEIPEAYALKGWYDSKGRNANFITLKQEPGMGGQSAASLTKFIAQRITIARAQAENLGRSEKGDFFSVKAAISFLKVDNFAYPACSNENCNKKVLEQPDGTWRCEKCDTNNARPNWRYILTISIIDETNQLWLTLFDDQAKQLLGVDANTLMSLKEEDPNEFTKITQSIQMNEYDFRIRAREDTYNDQSRIRYTVANLHSLNYRAEADYLADELSKALLA</sequence>
<dbReference type="EMBL" id="X59748">
    <property type="protein sequence ID" value="CAA42420.1"/>
    <property type="molecule type" value="Genomic_DNA"/>
</dbReference>
<dbReference type="EMBL" id="M60262">
    <property type="protein sequence ID" value="AAA34994.1"/>
    <property type="molecule type" value="Genomic_DNA"/>
</dbReference>
<dbReference type="EMBL" id="S64901">
    <property type="protein sequence ID" value="AAB27889.1"/>
    <property type="molecule type" value="Genomic_DNA"/>
</dbReference>
<dbReference type="EMBL" id="L22015">
    <property type="protein sequence ID" value="AAC04960.1"/>
    <property type="molecule type" value="Genomic_DNA"/>
</dbReference>
<dbReference type="EMBL" id="BK006935">
    <property type="protein sequence ID" value="DAA06989.1"/>
    <property type="molecule type" value="Genomic_DNA"/>
</dbReference>
<dbReference type="PIR" id="S20145">
    <property type="entry name" value="S20145"/>
</dbReference>
<dbReference type="RefSeq" id="NP_009404.1">
    <property type="nucleotide sequence ID" value="NM_001178211.1"/>
</dbReference>
<dbReference type="PDB" id="1YNX">
    <property type="method" value="NMR"/>
    <property type="chains" value="A=181-294"/>
</dbReference>
<dbReference type="PDB" id="5M1X">
    <property type="method" value="X-ray"/>
    <property type="resolution" value="1.80 A"/>
    <property type="chains" value="A/B/C/D=1-132"/>
</dbReference>
<dbReference type="PDB" id="5OMB">
    <property type="method" value="X-ray"/>
    <property type="resolution" value="1.94 A"/>
    <property type="chains" value="A/B=1-132"/>
</dbReference>
<dbReference type="PDB" id="5OMC">
    <property type="method" value="X-ray"/>
    <property type="resolution" value="2.38 A"/>
    <property type="chains" value="A/B=1-132"/>
</dbReference>
<dbReference type="PDB" id="6I52">
    <property type="method" value="EM"/>
    <property type="resolution" value="4.70 A"/>
    <property type="chains" value="C=442-619"/>
</dbReference>
<dbReference type="PDB" id="8B4J">
    <property type="method" value="X-ray"/>
    <property type="resolution" value="1.58 A"/>
    <property type="chains" value="O=1-132"/>
</dbReference>
<dbReference type="PDB" id="8B4K">
    <property type="method" value="X-ray"/>
    <property type="resolution" value="1.55 A"/>
    <property type="chains" value="A/B/C=2-132"/>
</dbReference>
<dbReference type="PDBsum" id="1YNX"/>
<dbReference type="PDBsum" id="5M1X"/>
<dbReference type="PDBsum" id="5OMB"/>
<dbReference type="PDBsum" id="5OMC"/>
<dbReference type="PDBsum" id="6I52"/>
<dbReference type="PDBsum" id="8B4J"/>
<dbReference type="PDBsum" id="8B4K"/>
<dbReference type="BMRB" id="P22336"/>
<dbReference type="EMDB" id="EMD-4410"/>
<dbReference type="SMR" id="P22336"/>
<dbReference type="BioGRID" id="31793">
    <property type="interactions" value="366"/>
</dbReference>
<dbReference type="ComplexPortal" id="CPX-21">
    <property type="entry name" value="Replication protein A complex"/>
</dbReference>
<dbReference type="DIP" id="DIP-2512N"/>
<dbReference type="FunCoup" id="P22336">
    <property type="interactions" value="1402"/>
</dbReference>
<dbReference type="IntAct" id="P22336">
    <property type="interactions" value="73"/>
</dbReference>
<dbReference type="MINT" id="P22336"/>
<dbReference type="STRING" id="4932.YAR007C"/>
<dbReference type="iPTMnet" id="P22336"/>
<dbReference type="PaxDb" id="4932-YAR007C"/>
<dbReference type="PeptideAtlas" id="P22336"/>
<dbReference type="EnsemblFungi" id="YAR007C_mRNA">
    <property type="protein sequence ID" value="YAR007C"/>
    <property type="gene ID" value="YAR007C"/>
</dbReference>
<dbReference type="GeneID" id="851266"/>
<dbReference type="KEGG" id="sce:YAR007C"/>
<dbReference type="AGR" id="SGD:S000000065"/>
<dbReference type="SGD" id="S000000065">
    <property type="gene designation" value="RFA1"/>
</dbReference>
<dbReference type="VEuPathDB" id="FungiDB:YAR007C"/>
<dbReference type="eggNOG" id="KOG0851">
    <property type="taxonomic scope" value="Eukaryota"/>
</dbReference>
<dbReference type="GeneTree" id="ENSGT00390000012403"/>
<dbReference type="HOGENOM" id="CLU_012393_2_0_1"/>
<dbReference type="InParanoid" id="P22336"/>
<dbReference type="OMA" id="DQCDAFY"/>
<dbReference type="OrthoDB" id="1751331at2759"/>
<dbReference type="BioCyc" id="YEAST:G3O-28869-MONOMER"/>
<dbReference type="Reactome" id="R-SCE-110312">
    <property type="pathway name" value="Translesion synthesis by REV1"/>
</dbReference>
<dbReference type="Reactome" id="R-SCE-110320">
    <property type="pathway name" value="Translesion Synthesis by POLH"/>
</dbReference>
<dbReference type="Reactome" id="R-SCE-176187">
    <property type="pathway name" value="Activation of ATR in response to replication stress"/>
</dbReference>
<dbReference type="Reactome" id="R-SCE-5655862">
    <property type="pathway name" value="Translesion synthesis by POLK"/>
</dbReference>
<dbReference type="Reactome" id="R-SCE-5656121">
    <property type="pathway name" value="Translesion synthesis by POLI"/>
</dbReference>
<dbReference type="Reactome" id="R-SCE-5656169">
    <property type="pathway name" value="Termination of translesion DNA synthesis"/>
</dbReference>
<dbReference type="Reactome" id="R-SCE-5696397">
    <property type="pathway name" value="Gap-filling DNA repair synthesis and ligation in GG-NER"/>
</dbReference>
<dbReference type="Reactome" id="R-SCE-6782135">
    <property type="pathway name" value="Dual incision in TC-NER"/>
</dbReference>
<dbReference type="Reactome" id="R-SCE-6782210">
    <property type="pathway name" value="Gap-filling DNA repair synthesis and ligation in TC-NER"/>
</dbReference>
<dbReference type="Reactome" id="R-SCE-68962">
    <property type="pathway name" value="Activation of the pre-replicative complex"/>
</dbReference>
<dbReference type="Reactome" id="R-SCE-69166">
    <property type="pathway name" value="Removal of the Flap Intermediate"/>
</dbReference>
<dbReference type="BioGRID-ORCS" id="851266">
    <property type="hits" value="1 hit in 10 CRISPR screens"/>
</dbReference>
<dbReference type="EvolutionaryTrace" id="P22336"/>
<dbReference type="PRO" id="PR:P22336"/>
<dbReference type="Proteomes" id="UP000002311">
    <property type="component" value="Chromosome I"/>
</dbReference>
<dbReference type="RNAct" id="P22336">
    <property type="molecule type" value="protein"/>
</dbReference>
<dbReference type="GO" id="GO:0000781">
    <property type="term" value="C:chromosome, telomeric region"/>
    <property type="evidence" value="ECO:0000315"/>
    <property type="project" value="SGD"/>
</dbReference>
<dbReference type="GO" id="GO:0000794">
    <property type="term" value="C:condensed nuclear chromosome"/>
    <property type="evidence" value="ECO:0000314"/>
    <property type="project" value="SGD"/>
</dbReference>
<dbReference type="GO" id="GO:0005737">
    <property type="term" value="C:cytoplasm"/>
    <property type="evidence" value="ECO:0000314"/>
    <property type="project" value="SGD"/>
</dbReference>
<dbReference type="GO" id="GO:0005829">
    <property type="term" value="C:cytosol"/>
    <property type="evidence" value="ECO:0000314"/>
    <property type="project" value="SGD"/>
</dbReference>
<dbReference type="GO" id="GO:0005662">
    <property type="term" value="C:DNA replication factor A complex"/>
    <property type="evidence" value="ECO:0000314"/>
    <property type="project" value="SGD"/>
</dbReference>
<dbReference type="GO" id="GO:0005634">
    <property type="term" value="C:nucleus"/>
    <property type="evidence" value="ECO:0000314"/>
    <property type="project" value="SGD"/>
</dbReference>
<dbReference type="GO" id="GO:0003684">
    <property type="term" value="F:damaged DNA binding"/>
    <property type="evidence" value="ECO:0000318"/>
    <property type="project" value="GO_Central"/>
</dbReference>
<dbReference type="GO" id="GO:0003690">
    <property type="term" value="F:double-stranded DNA binding"/>
    <property type="evidence" value="ECO:0000314"/>
    <property type="project" value="SGD"/>
</dbReference>
<dbReference type="GO" id="GO:0003729">
    <property type="term" value="F:mRNA binding"/>
    <property type="evidence" value="ECO:0007005"/>
    <property type="project" value="SGD"/>
</dbReference>
<dbReference type="GO" id="GO:0043565">
    <property type="term" value="F:sequence-specific DNA binding"/>
    <property type="evidence" value="ECO:0000314"/>
    <property type="project" value="SGD"/>
</dbReference>
<dbReference type="GO" id="GO:0003697">
    <property type="term" value="F:single-stranded DNA binding"/>
    <property type="evidence" value="ECO:0000314"/>
    <property type="project" value="SGD"/>
</dbReference>
<dbReference type="GO" id="GO:0043047">
    <property type="term" value="F:single-stranded telomeric DNA binding"/>
    <property type="evidence" value="ECO:0000318"/>
    <property type="project" value="GO_Central"/>
</dbReference>
<dbReference type="GO" id="GO:0008270">
    <property type="term" value="F:zinc ion binding"/>
    <property type="evidence" value="ECO:0007669"/>
    <property type="project" value="UniProtKB-KW"/>
</dbReference>
<dbReference type="GO" id="GO:0006281">
    <property type="term" value="P:DNA repair"/>
    <property type="evidence" value="ECO:0000314"/>
    <property type="project" value="ComplexPortal"/>
</dbReference>
<dbReference type="GO" id="GO:0006260">
    <property type="term" value="P:DNA replication"/>
    <property type="evidence" value="ECO:0000314"/>
    <property type="project" value="ComplexPortal"/>
</dbReference>
<dbReference type="GO" id="GO:0006265">
    <property type="term" value="P:DNA topological change"/>
    <property type="evidence" value="ECO:0000314"/>
    <property type="project" value="SGD"/>
</dbReference>
<dbReference type="GO" id="GO:0000724">
    <property type="term" value="P:double-strand break repair via homologous recombination"/>
    <property type="evidence" value="ECO:0000316"/>
    <property type="project" value="SGD"/>
</dbReference>
<dbReference type="GO" id="GO:0045184">
    <property type="term" value="P:establishment of protein localization"/>
    <property type="evidence" value="ECO:0000353"/>
    <property type="project" value="SGD"/>
</dbReference>
<dbReference type="GO" id="GO:0030491">
    <property type="term" value="P:heteroduplex formation"/>
    <property type="evidence" value="ECO:0000314"/>
    <property type="project" value="SGD"/>
</dbReference>
<dbReference type="GO" id="GO:0051321">
    <property type="term" value="P:meiotic cell cycle"/>
    <property type="evidence" value="ECO:0000318"/>
    <property type="project" value="GO_Central"/>
</dbReference>
<dbReference type="GO" id="GO:0006312">
    <property type="term" value="P:mitotic recombination"/>
    <property type="evidence" value="ECO:0000315"/>
    <property type="project" value="SGD"/>
</dbReference>
<dbReference type="GO" id="GO:0006289">
    <property type="term" value="P:nucleotide-excision repair"/>
    <property type="evidence" value="ECO:0000314"/>
    <property type="project" value="SGD"/>
</dbReference>
<dbReference type="GO" id="GO:0016567">
    <property type="term" value="P:protein ubiquitination"/>
    <property type="evidence" value="ECO:0000315"/>
    <property type="project" value="SGD"/>
</dbReference>
<dbReference type="GO" id="GO:0007131">
    <property type="term" value="P:reciprocal meiotic recombination"/>
    <property type="evidence" value="ECO:0000315"/>
    <property type="project" value="SGD"/>
</dbReference>
<dbReference type="GO" id="GO:0043934">
    <property type="term" value="P:sporulation"/>
    <property type="evidence" value="ECO:0000315"/>
    <property type="project" value="CACAO"/>
</dbReference>
<dbReference type="GO" id="GO:0000723">
    <property type="term" value="P:telomere maintenance"/>
    <property type="evidence" value="ECO:0000303"/>
    <property type="project" value="ComplexPortal"/>
</dbReference>
<dbReference type="GO" id="GO:0000722">
    <property type="term" value="P:telomere maintenance via recombination"/>
    <property type="evidence" value="ECO:0000316"/>
    <property type="project" value="SGD"/>
</dbReference>
<dbReference type="GO" id="GO:0007004">
    <property type="term" value="P:telomere maintenance via telomerase"/>
    <property type="evidence" value="ECO:0000353"/>
    <property type="project" value="SGD"/>
</dbReference>
<dbReference type="GO" id="GO:0010833">
    <property type="term" value="P:telomere maintenance via telomere lengthening"/>
    <property type="evidence" value="ECO:0000315"/>
    <property type="project" value="SGD"/>
</dbReference>
<dbReference type="CDD" id="cd04474">
    <property type="entry name" value="RPA1_DBD_A"/>
    <property type="match status" value="1"/>
</dbReference>
<dbReference type="CDD" id="cd04475">
    <property type="entry name" value="RPA1_DBD_B"/>
    <property type="match status" value="1"/>
</dbReference>
<dbReference type="CDD" id="cd04476">
    <property type="entry name" value="RPA1_DBD_C"/>
    <property type="match status" value="1"/>
</dbReference>
<dbReference type="CDD" id="cd04477">
    <property type="entry name" value="RPA1N"/>
    <property type="match status" value="1"/>
</dbReference>
<dbReference type="FunFam" id="2.40.50.140:FF:000041">
    <property type="entry name" value="Replication protein A subunit"/>
    <property type="match status" value="1"/>
</dbReference>
<dbReference type="FunFam" id="2.40.50.140:FF:000064">
    <property type="entry name" value="Replication protein A subunit"/>
    <property type="match status" value="1"/>
</dbReference>
<dbReference type="FunFam" id="2.40.50.140:FF:000090">
    <property type="entry name" value="Replication protein A subunit"/>
    <property type="match status" value="1"/>
</dbReference>
<dbReference type="Gene3D" id="2.40.50.140">
    <property type="entry name" value="Nucleic acid-binding proteins"/>
    <property type="match status" value="4"/>
</dbReference>
<dbReference type="InterPro" id="IPR047192">
    <property type="entry name" value="Euk_RPA1_DBD_C"/>
</dbReference>
<dbReference type="InterPro" id="IPR012340">
    <property type="entry name" value="NA-bd_OB-fold"/>
</dbReference>
<dbReference type="InterPro" id="IPR004365">
    <property type="entry name" value="NA-bd_OB_tRNA"/>
</dbReference>
<dbReference type="InterPro" id="IPR013955">
    <property type="entry name" value="Rep_factor-A_C"/>
</dbReference>
<dbReference type="InterPro" id="IPR007199">
    <property type="entry name" value="Rep_factor-A_N"/>
</dbReference>
<dbReference type="InterPro" id="IPR031657">
    <property type="entry name" value="REPA_OB_2"/>
</dbReference>
<dbReference type="InterPro" id="IPR004591">
    <property type="entry name" value="Rfa1"/>
</dbReference>
<dbReference type="NCBIfam" id="TIGR00617">
    <property type="entry name" value="rpa1"/>
    <property type="match status" value="1"/>
</dbReference>
<dbReference type="PANTHER" id="PTHR47165">
    <property type="entry name" value="OS03G0429900 PROTEIN"/>
    <property type="match status" value="1"/>
</dbReference>
<dbReference type="PANTHER" id="PTHR47165:SF4">
    <property type="entry name" value="OS03G0429900 PROTEIN"/>
    <property type="match status" value="1"/>
</dbReference>
<dbReference type="Pfam" id="PF08646">
    <property type="entry name" value="Rep_fac-A_C"/>
    <property type="match status" value="1"/>
</dbReference>
<dbReference type="Pfam" id="PF16900">
    <property type="entry name" value="REPA_OB_2"/>
    <property type="match status" value="1"/>
</dbReference>
<dbReference type="Pfam" id="PF01336">
    <property type="entry name" value="tRNA_anti-codon"/>
    <property type="match status" value="1"/>
</dbReference>
<dbReference type="SUPFAM" id="SSF50249">
    <property type="entry name" value="Nucleic acid-binding proteins"/>
    <property type="match status" value="4"/>
</dbReference>
<protein>
    <recommendedName>
        <fullName>Replication factor A protein 1</fullName>
        <shortName>RF-A protein 1</shortName>
    </recommendedName>
    <alternativeName>
        <fullName>DNA-binding protein BUF2</fullName>
    </alternativeName>
    <alternativeName>
        <fullName>Replication protein A 69 kDa DNA-binding subunit</fullName>
    </alternativeName>
    <alternativeName>
        <fullName>Single-stranded DNA-binding protein</fullName>
    </alternativeName>
</protein>
<feature type="initiator methionine" description="Removed" evidence="6">
    <location>
        <position position="1"/>
    </location>
</feature>
<feature type="chain" id="PRO_0000097268" description="Replication factor A protein 1">
    <location>
        <begin position="2"/>
        <end position="621"/>
    </location>
</feature>
<feature type="DNA-binding region" description="OB">
    <location>
        <begin position="197"/>
        <end position="284"/>
    </location>
</feature>
<feature type="zinc finger region" description="C4-type" evidence="1">
    <location>
        <begin position="486"/>
        <end position="508"/>
    </location>
</feature>
<feature type="modified residue" description="N-acetylserine" evidence="6">
    <location>
        <position position="2"/>
    </location>
</feature>
<feature type="modified residue" description="Phosphoserine; by ATM or ATR" evidence="5">
    <location>
        <position position="178"/>
    </location>
</feature>
<feature type="helix" evidence="10">
    <location>
        <begin position="10"/>
        <end position="16"/>
    </location>
</feature>
<feature type="helix" evidence="10">
    <location>
        <begin position="18"/>
        <end position="21"/>
    </location>
</feature>
<feature type="strand" evidence="10">
    <location>
        <begin position="28"/>
        <end position="33"/>
    </location>
</feature>
<feature type="turn" evidence="8">
    <location>
        <begin position="39"/>
        <end position="41"/>
    </location>
</feature>
<feature type="helix" evidence="9">
    <location>
        <begin position="43"/>
        <end position="46"/>
    </location>
</feature>
<feature type="strand" evidence="10">
    <location>
        <begin position="47"/>
        <end position="51"/>
    </location>
</feature>
<feature type="strand" evidence="10">
    <location>
        <begin position="53"/>
        <end position="61"/>
    </location>
</feature>
<feature type="helix" evidence="10">
    <location>
        <begin position="64"/>
        <end position="71"/>
    </location>
</feature>
<feature type="strand" evidence="10">
    <location>
        <begin position="79"/>
        <end position="90"/>
    </location>
</feature>
<feature type="turn" evidence="10">
    <location>
        <begin position="91"/>
        <end position="94"/>
    </location>
</feature>
<feature type="strand" evidence="10">
    <location>
        <begin position="95"/>
        <end position="109"/>
    </location>
</feature>
<feature type="helix" evidence="10">
    <location>
        <begin position="120"/>
        <end position="126"/>
    </location>
</feature>
<feature type="helix" evidence="10">
    <location>
        <begin position="128"/>
        <end position="130"/>
    </location>
</feature>
<feature type="helix" evidence="7">
    <location>
        <begin position="187"/>
        <end position="189"/>
    </location>
</feature>
<feature type="turn" evidence="7">
    <location>
        <begin position="192"/>
        <end position="194"/>
    </location>
</feature>
<feature type="strand" evidence="7">
    <location>
        <begin position="198"/>
        <end position="213"/>
    </location>
</feature>
<feature type="strand" evidence="7">
    <location>
        <begin position="218"/>
        <end position="228"/>
    </location>
</feature>
<feature type="strand" evidence="7">
    <location>
        <begin position="231"/>
        <end position="237"/>
    </location>
</feature>
<feature type="helix" evidence="7">
    <location>
        <begin position="239"/>
        <end position="248"/>
    </location>
</feature>
<feature type="strand" evidence="7">
    <location>
        <begin position="251"/>
        <end position="259"/>
    </location>
</feature>
<feature type="strand" evidence="7">
    <location>
        <begin position="261"/>
        <end position="264"/>
    </location>
</feature>
<feature type="turn" evidence="7">
    <location>
        <begin position="267"/>
        <end position="269"/>
    </location>
</feature>
<feature type="strand" evidence="7">
    <location>
        <begin position="270"/>
        <end position="274"/>
    </location>
</feature>
<feature type="strand" evidence="7">
    <location>
        <begin position="276"/>
        <end position="280"/>
    </location>
</feature>
<feature type="strand" evidence="7">
    <location>
        <begin position="285"/>
        <end position="289"/>
    </location>
</feature>
<keyword id="KW-0002">3D-structure</keyword>
<keyword id="KW-0007">Acetylation</keyword>
<keyword id="KW-0903">Direct protein sequencing</keyword>
<keyword id="KW-0235">DNA replication</keyword>
<keyword id="KW-0238">DNA-binding</keyword>
<keyword id="KW-0479">Metal-binding</keyword>
<keyword id="KW-0539">Nucleus</keyword>
<keyword id="KW-0597">Phosphoprotein</keyword>
<keyword id="KW-1185">Reference proteome</keyword>
<keyword id="KW-0862">Zinc</keyword>
<keyword id="KW-0863">Zinc-finger</keyword>
<organism>
    <name type="scientific">Saccharomyces cerevisiae (strain ATCC 204508 / S288c)</name>
    <name type="common">Baker's yeast</name>
    <dbReference type="NCBI Taxonomy" id="559292"/>
    <lineage>
        <taxon>Eukaryota</taxon>
        <taxon>Fungi</taxon>
        <taxon>Dikarya</taxon>
        <taxon>Ascomycota</taxon>
        <taxon>Saccharomycotina</taxon>
        <taxon>Saccharomycetes</taxon>
        <taxon>Saccharomycetales</taxon>
        <taxon>Saccharomycetaceae</taxon>
        <taxon>Saccharomyces</taxon>
    </lineage>
</organism>
<accession>P22336</accession>
<accession>D6VPL9</accession>
<accession>P38906</accession>
<proteinExistence type="evidence at protein level"/>
<comment type="function">
    <text>As part of the replication protein A (RPA/RP-A), a single-stranded DNA-binding heterotrimeric complex, may play an essential role in DNA replication, recombination and repair. Binds and stabilizes single-stranded DNA intermediates, preventing complementary DNA reannealing and recruiting different proteins involved in DNA metabolism. Binds to single-stranded sequences participating in DNA replication in addition to those mediating transcriptional repression (URS1) and activation (CAR1). Stimulates the activity of a cognate strand exchange protein (SEP1). It cooperates with T-AG and DNA topoisomerase I to unwind template DNA containing the simian virus 40 origin of DNA replication.</text>
</comment>
<comment type="subunit">
    <text evidence="3">Component of the heterotrimeric canonical replication protein A complex (RPA). Interacts with POB3.</text>
</comment>
<comment type="interaction">
    <interactant intactId="EBI-14971">
        <id>P22336</id>
    </interactant>
    <interactant intactId="EBI-5973">
        <id>P38859</id>
        <label>DNA2</label>
    </interactant>
    <organismsDiffer>false</organismsDiffer>
    <experiments>4</experiments>
</comment>
<comment type="interaction">
    <interactant intactId="EBI-14971">
        <id>P22336</id>
    </interactant>
    <interactant intactId="EBI-27863">
        <id>Q04636</id>
        <label>POB3</label>
    </interactant>
    <organismsDiffer>false</organismsDiffer>
    <experiments>4</experiments>
</comment>
<comment type="interaction">
    <interactant intactId="EBI-14971">
        <id>P22336</id>
    </interactant>
    <interactant intactId="EBI-14976">
        <id>P26754</id>
        <label>RFA2</label>
    </interactant>
    <organismsDiffer>false</organismsDiffer>
    <experiments>5</experiments>
</comment>
<comment type="interaction">
    <interactant intactId="EBI-14971">
        <id>P22336</id>
    </interactant>
    <interactant intactId="EBI-14981">
        <id>P26755</id>
        <label>RFA3</label>
    </interactant>
    <organismsDiffer>false</organismsDiffer>
    <experiments>5</experiments>
</comment>
<comment type="interaction">
    <interactant intactId="EBI-14971">
        <id>P22336</id>
    </interactant>
    <interactant intactId="EBI-17059">
        <id>P35187</id>
        <label>SGS1</label>
    </interactant>
    <organismsDiffer>false</organismsDiffer>
    <experiments>5</experiments>
</comment>
<comment type="interaction">
    <interactant intactId="EBI-14971">
        <id>P22336</id>
    </interactant>
    <interactant intactId="EBI-8224">
        <id>Q04437</id>
        <label>YKU80</label>
    </interactant>
    <organismsDiffer>false</organismsDiffer>
    <experiments>2</experiments>
</comment>
<comment type="subcellular location">
    <subcellularLocation>
        <location>Nucleus</location>
    </subcellularLocation>
</comment>
<comment type="PTM">
    <text>The N-terminus is blocked.</text>
</comment>
<comment type="miscellaneous">
    <text evidence="2">Present with 4100 molecules/cell in log phase SD medium.</text>
</comment>
<comment type="similarity">
    <text evidence="4">Belongs to the replication factor A protein 1 family.</text>
</comment>
<reference key="1">
    <citation type="journal article" date="1991" name="Genes Dev.">
        <title>Replication factor-A from Saccharomyces cerevisiae is encoded by three essential genes coordinately expressed at S phase.</title>
        <authorList>
            <person name="Brill S.J."/>
            <person name="Stillman B."/>
        </authorList>
    </citation>
    <scope>NUCLEOTIDE SEQUENCE [GENOMIC DNA]</scope>
    <scope>PROTEIN SEQUENCE OF 111-129 AND 495-503</scope>
    <source>
        <strain>ATCC 208353 / W303-1A</strain>
    </source>
</reference>
<reference key="2">
    <citation type="journal article" date="1990" name="EMBO J.">
        <title>An essential Saccharomyces cerevisiae single-stranded DNA binding protein is homologous to the large subunit of human RP-A.</title>
        <authorList>
            <person name="Heyer W.-D."/>
            <person name="Rao M.R."/>
            <person name="Erdile L.F."/>
            <person name="Kelley T.J."/>
            <person name="Kolodner R.D."/>
        </authorList>
    </citation>
    <scope>NUCLEOTIDE SEQUENCE [GENOMIC DNA]</scope>
    <scope>PARTIAL PROTEIN SEQUENCE</scope>
</reference>
<reference key="3">
    <citation type="journal article" date="1993" name="Mol. Cell. Biol.">
        <title>Saccharomyces cerevisiae BUF protein binds to sequences participating in DNA replication in addition to those mediating transcriptional repression (URS1) and activation.</title>
        <authorList>
            <person name="Luche R.M."/>
            <person name="Smart W.C."/>
            <person name="Marion T."/>
            <person name="Tillman M."/>
            <person name="Sumrada R.A."/>
            <person name="Cooper T.G."/>
        </authorList>
    </citation>
    <scope>NUCLEOTIDE SEQUENCE [GENOMIC DNA]</scope>
</reference>
<reference key="4">
    <citation type="journal article" date="1994" name="Yeast">
        <title>Sequencing of chromosome I of Saccharomyces cerevisiae: analysis of the 42 kbp SPO7-CENI-CDC15 region.</title>
        <authorList>
            <person name="Clark M.W."/>
            <person name="Keng T."/>
            <person name="Storms R.K."/>
            <person name="Zhong W.-W."/>
            <person name="Fortin N."/>
            <person name="Zeng B."/>
            <person name="Delaney S."/>
            <person name="Ouellette B.F.F."/>
            <person name="Barton A.B."/>
            <person name="Kaback D.B."/>
            <person name="Bussey H."/>
        </authorList>
    </citation>
    <scope>NUCLEOTIDE SEQUENCE [GENOMIC DNA]</scope>
    <source>
        <strain>ATCC 204511 / S288c / AB972</strain>
    </source>
</reference>
<reference key="5">
    <citation type="journal article" date="1995" name="Proc. Natl. Acad. Sci. U.S.A.">
        <title>The nucleotide sequence of chromosome I from Saccharomyces cerevisiae.</title>
        <authorList>
            <person name="Bussey H."/>
            <person name="Kaback D.B."/>
            <person name="Zhong W.-W."/>
            <person name="Vo D.H."/>
            <person name="Clark M.W."/>
            <person name="Fortin N."/>
            <person name="Hall J."/>
            <person name="Ouellette B.F.F."/>
            <person name="Keng T."/>
            <person name="Barton A.B."/>
            <person name="Su Y."/>
            <person name="Davies C.J."/>
            <person name="Storms R.K."/>
        </authorList>
    </citation>
    <scope>NUCLEOTIDE SEQUENCE [LARGE SCALE GENOMIC DNA]</scope>
    <source>
        <strain>ATCC 204508 / S288c</strain>
    </source>
</reference>
<reference key="6">
    <citation type="journal article" date="2014" name="G3 (Bethesda)">
        <title>The reference genome sequence of Saccharomyces cerevisiae: Then and now.</title>
        <authorList>
            <person name="Engel S.R."/>
            <person name="Dietrich F.S."/>
            <person name="Fisk D.G."/>
            <person name="Binkley G."/>
            <person name="Balakrishnan R."/>
            <person name="Costanzo M.C."/>
            <person name="Dwight S.S."/>
            <person name="Hitz B.C."/>
            <person name="Karra K."/>
            <person name="Nash R.S."/>
            <person name="Weng S."/>
            <person name="Wong E.D."/>
            <person name="Lloyd P."/>
            <person name="Skrzypek M.S."/>
            <person name="Miyasato S.R."/>
            <person name="Simison M."/>
            <person name="Cherry J.M."/>
        </authorList>
    </citation>
    <scope>GENOME REANNOTATION</scope>
    <source>
        <strain>ATCC 204508 / S288c</strain>
    </source>
</reference>
<reference key="7">
    <citation type="journal article" date="2003" name="Nature">
        <title>Global analysis of protein expression in yeast.</title>
        <authorList>
            <person name="Ghaemmaghami S."/>
            <person name="Huh W.-K."/>
            <person name="Bower K."/>
            <person name="Howson R.W."/>
            <person name="Belle A."/>
            <person name="Dephoure N."/>
            <person name="O'Shea E.K."/>
            <person name="Weissman J.S."/>
        </authorList>
    </citation>
    <scope>LEVEL OF PROTEIN EXPRESSION [LARGE SCALE ANALYSIS]</scope>
</reference>
<reference key="8">
    <citation type="journal article" date="2006" name="Mol. Cell">
        <title>The structure of the yFACT Pob3-M domain, its interaction with the DNA replication factor RPA, and a potential role in nucleosome deposition.</title>
        <authorList>
            <person name="Vandemark A.P."/>
            <person name="Blanksma M."/>
            <person name="Ferris E."/>
            <person name="Heroux A."/>
            <person name="Hill C.P."/>
            <person name="Formosa T."/>
        </authorList>
    </citation>
    <scope>INTERACTION WITH POB3</scope>
</reference>
<reference key="9">
    <citation type="journal article" date="2008" name="Mol. Cell. Proteomics">
        <title>A multidimensional chromatography technology for in-depth phosphoproteome analysis.</title>
        <authorList>
            <person name="Albuquerque C.P."/>
            <person name="Smolka M.B."/>
            <person name="Payne S.H."/>
            <person name="Bafna V."/>
            <person name="Eng J."/>
            <person name="Zhou H."/>
        </authorList>
    </citation>
    <scope>PHOSPHORYLATION [LARGE SCALE ANALYSIS] AT SER-178</scope>
    <scope>IDENTIFICATION BY MASS SPECTROMETRY [LARGE SCALE ANALYSIS]</scope>
</reference>
<reference key="10">
    <citation type="journal article" date="2012" name="Proc. Natl. Acad. Sci. U.S.A.">
        <title>N-terminal acetylome analyses and functional insights of the N-terminal acetyltransferase NatB.</title>
        <authorList>
            <person name="Van Damme P."/>
            <person name="Lasa M."/>
            <person name="Polevoda B."/>
            <person name="Gazquez C."/>
            <person name="Elosegui-Artola A."/>
            <person name="Kim D.S."/>
            <person name="De Juan-Pardo E."/>
            <person name="Demeyer K."/>
            <person name="Hole K."/>
            <person name="Larrea E."/>
            <person name="Timmerman E."/>
            <person name="Prieto J."/>
            <person name="Arnesen T."/>
            <person name="Sherman F."/>
            <person name="Gevaert K."/>
            <person name="Aldabe R."/>
        </authorList>
    </citation>
    <scope>ACETYLATION [LARGE SCALE ANALYSIS] AT SER-2</scope>
    <scope>CLEAVAGE OF INITIATOR METHIONINE [LARGE SCALE ANALYSIS]</scope>
    <scope>IDENTIFICATION BY MASS SPECTROMETRY [LARGE SCALE ANALYSIS]</scope>
</reference>
<name>RFA1_YEAST</name>